<organism>
    <name type="scientific">Chlamydia trachomatis serovar L2 (strain ATCC VR-902B / DSM 19102 / 434/Bu)</name>
    <dbReference type="NCBI Taxonomy" id="471472"/>
    <lineage>
        <taxon>Bacteria</taxon>
        <taxon>Pseudomonadati</taxon>
        <taxon>Chlamydiota</taxon>
        <taxon>Chlamydiia</taxon>
        <taxon>Chlamydiales</taxon>
        <taxon>Chlamydiaceae</taxon>
        <taxon>Chlamydia/Chlamydophila group</taxon>
        <taxon>Chlamydia</taxon>
    </lineage>
</organism>
<comment type="function">
    <text evidence="1">Carrier of the growing fatty acid chain in fatty acid biosynthesis.</text>
</comment>
<comment type="pathway">
    <text evidence="1">Lipid metabolism; fatty acid biosynthesis.</text>
</comment>
<comment type="subcellular location">
    <subcellularLocation>
        <location evidence="1">Cytoplasm</location>
    </subcellularLocation>
</comment>
<comment type="PTM">
    <text evidence="1">4'-phosphopantetheine is transferred from CoA to a specific serine of apo-ACP by AcpS. This modification is essential for activity because fatty acids are bound in thioester linkage to the sulfhydryl of the prosthetic group.</text>
</comment>
<comment type="similarity">
    <text evidence="1">Belongs to the acyl carrier protein (ACP) family.</text>
</comment>
<sequence length="77" mass="8702">MSLEDDVKAIIVDQLGVSPEDVKVDSSFIEDLNADSLDLTELIMTLEEKFAFEISEDDAEQLRTVGDVIKYIQEHQN</sequence>
<evidence type="ECO:0000255" key="1">
    <source>
        <dbReference type="HAMAP-Rule" id="MF_01217"/>
    </source>
</evidence>
<evidence type="ECO:0000255" key="2">
    <source>
        <dbReference type="PROSITE-ProRule" id="PRU00258"/>
    </source>
</evidence>
<keyword id="KW-0963">Cytoplasm</keyword>
<keyword id="KW-0275">Fatty acid biosynthesis</keyword>
<keyword id="KW-0276">Fatty acid metabolism</keyword>
<keyword id="KW-0444">Lipid biosynthesis</keyword>
<keyword id="KW-0443">Lipid metabolism</keyword>
<keyword id="KW-0596">Phosphopantetheine</keyword>
<keyword id="KW-0597">Phosphoprotein</keyword>
<feature type="chain" id="PRO_1000139011" description="Acyl carrier protein">
    <location>
        <begin position="1"/>
        <end position="77"/>
    </location>
</feature>
<feature type="domain" description="Carrier" evidence="2">
    <location>
        <begin position="1"/>
        <end position="76"/>
    </location>
</feature>
<feature type="modified residue" description="O-(pantetheine 4'-phosphoryl)serine" evidence="2">
    <location>
        <position position="36"/>
    </location>
</feature>
<dbReference type="EMBL" id="AM884176">
    <property type="protein sequence ID" value="CAP03928.1"/>
    <property type="molecule type" value="Genomic_DNA"/>
</dbReference>
<dbReference type="RefSeq" id="WP_009873663.1">
    <property type="nucleotide sequence ID" value="NC_010287.1"/>
</dbReference>
<dbReference type="RefSeq" id="YP_001654565.1">
    <property type="nucleotide sequence ID" value="NC_010287.1"/>
</dbReference>
<dbReference type="SMR" id="B0B7F2"/>
<dbReference type="KEGG" id="ctb:CTL0488"/>
<dbReference type="PATRIC" id="fig|471472.4.peg.524"/>
<dbReference type="HOGENOM" id="CLU_108696_5_1_0"/>
<dbReference type="UniPathway" id="UPA00094"/>
<dbReference type="Proteomes" id="UP001154402">
    <property type="component" value="Chromosome"/>
</dbReference>
<dbReference type="GO" id="GO:0005829">
    <property type="term" value="C:cytosol"/>
    <property type="evidence" value="ECO:0007669"/>
    <property type="project" value="TreeGrafter"/>
</dbReference>
<dbReference type="GO" id="GO:0016020">
    <property type="term" value="C:membrane"/>
    <property type="evidence" value="ECO:0007669"/>
    <property type="project" value="GOC"/>
</dbReference>
<dbReference type="GO" id="GO:0000035">
    <property type="term" value="F:acyl binding"/>
    <property type="evidence" value="ECO:0007669"/>
    <property type="project" value="TreeGrafter"/>
</dbReference>
<dbReference type="GO" id="GO:0000036">
    <property type="term" value="F:acyl carrier activity"/>
    <property type="evidence" value="ECO:0007669"/>
    <property type="project" value="UniProtKB-UniRule"/>
</dbReference>
<dbReference type="GO" id="GO:0009245">
    <property type="term" value="P:lipid A biosynthetic process"/>
    <property type="evidence" value="ECO:0007669"/>
    <property type="project" value="TreeGrafter"/>
</dbReference>
<dbReference type="FunFam" id="1.10.1200.10:FF:000041">
    <property type="entry name" value="Acyl carrier protein"/>
    <property type="match status" value="1"/>
</dbReference>
<dbReference type="Gene3D" id="1.10.1200.10">
    <property type="entry name" value="ACP-like"/>
    <property type="match status" value="1"/>
</dbReference>
<dbReference type="HAMAP" id="MF_01217">
    <property type="entry name" value="Acyl_carrier"/>
    <property type="match status" value="1"/>
</dbReference>
<dbReference type="InterPro" id="IPR003231">
    <property type="entry name" value="ACP"/>
</dbReference>
<dbReference type="InterPro" id="IPR036736">
    <property type="entry name" value="ACP-like_sf"/>
</dbReference>
<dbReference type="InterPro" id="IPR009081">
    <property type="entry name" value="PP-bd_ACP"/>
</dbReference>
<dbReference type="InterPro" id="IPR006162">
    <property type="entry name" value="Ppantetheine_attach_site"/>
</dbReference>
<dbReference type="NCBIfam" id="TIGR00517">
    <property type="entry name" value="acyl_carrier"/>
    <property type="match status" value="1"/>
</dbReference>
<dbReference type="NCBIfam" id="NF002148">
    <property type="entry name" value="PRK00982.1-2"/>
    <property type="match status" value="1"/>
</dbReference>
<dbReference type="NCBIfam" id="NF002150">
    <property type="entry name" value="PRK00982.1-4"/>
    <property type="match status" value="1"/>
</dbReference>
<dbReference type="PANTHER" id="PTHR20863">
    <property type="entry name" value="ACYL CARRIER PROTEIN"/>
    <property type="match status" value="1"/>
</dbReference>
<dbReference type="PANTHER" id="PTHR20863:SF76">
    <property type="entry name" value="CARRIER DOMAIN-CONTAINING PROTEIN"/>
    <property type="match status" value="1"/>
</dbReference>
<dbReference type="Pfam" id="PF00550">
    <property type="entry name" value="PP-binding"/>
    <property type="match status" value="1"/>
</dbReference>
<dbReference type="SUPFAM" id="SSF47336">
    <property type="entry name" value="ACP-like"/>
    <property type="match status" value="1"/>
</dbReference>
<dbReference type="PROSITE" id="PS50075">
    <property type="entry name" value="CARRIER"/>
    <property type="match status" value="1"/>
</dbReference>
<dbReference type="PROSITE" id="PS00012">
    <property type="entry name" value="PHOSPHOPANTETHEINE"/>
    <property type="match status" value="1"/>
</dbReference>
<reference key="1">
    <citation type="journal article" date="2008" name="Genome Res.">
        <title>Chlamydia trachomatis: genome sequence analysis of lymphogranuloma venereum isolates.</title>
        <authorList>
            <person name="Thomson N.R."/>
            <person name="Holden M.T.G."/>
            <person name="Carder C."/>
            <person name="Lennard N."/>
            <person name="Lockey S.J."/>
            <person name="Marsh P."/>
            <person name="Skipp P."/>
            <person name="O'Connor C.D."/>
            <person name="Goodhead I."/>
            <person name="Norbertzcak H."/>
            <person name="Harris B."/>
            <person name="Ormond D."/>
            <person name="Rance R."/>
            <person name="Quail M.A."/>
            <person name="Parkhill J."/>
            <person name="Stephens R.S."/>
            <person name="Clarke I.N."/>
        </authorList>
    </citation>
    <scope>NUCLEOTIDE SEQUENCE [LARGE SCALE GENOMIC DNA]</scope>
    <source>
        <strain>ATCC VR-902B / DSM 19102 / 434/Bu</strain>
    </source>
</reference>
<protein>
    <recommendedName>
        <fullName evidence="1">Acyl carrier protein</fullName>
        <shortName evidence="1">ACP</shortName>
    </recommendedName>
</protein>
<name>ACP_CHLT2</name>
<proteinExistence type="inferred from homology"/>
<accession>B0B7F2</accession>
<gene>
    <name evidence="1" type="primary">acpP</name>
    <name type="ordered locus">CTL0488</name>
</gene>